<dbReference type="EMBL" id="Z33642">
    <property type="protein sequence ID" value="CAA83923.1"/>
    <property type="molecule type" value="mRNA"/>
</dbReference>
<dbReference type="EMBL" id="AL445231">
    <property type="status" value="NOT_ANNOTATED_CDS"/>
    <property type="molecule type" value="Genomic_DNA"/>
</dbReference>
<dbReference type="CCDS" id="CCDS891.1"/>
<dbReference type="PIR" id="I39207">
    <property type="entry name" value="I39207"/>
</dbReference>
<dbReference type="RefSeq" id="NP_001243035.1">
    <property type="nucleotide sequence ID" value="NM_001256106.3"/>
</dbReference>
<dbReference type="RefSeq" id="NP_001243038.1">
    <property type="nucleotide sequence ID" value="NM_001256109.3"/>
</dbReference>
<dbReference type="RefSeq" id="NP_004249.2">
    <property type="nucleotide sequence ID" value="NM_004258.6"/>
</dbReference>
<dbReference type="BioGRID" id="114795">
    <property type="interactions" value="6"/>
</dbReference>
<dbReference type="FunCoup" id="Q93033">
    <property type="interactions" value="75"/>
</dbReference>
<dbReference type="IntAct" id="Q93033">
    <property type="interactions" value="5"/>
</dbReference>
<dbReference type="STRING" id="9606.ENSP00000358482"/>
<dbReference type="GlyCosmos" id="Q93033">
    <property type="glycosylation" value="2 sites, No reported glycans"/>
</dbReference>
<dbReference type="GlyGen" id="Q93033">
    <property type="glycosylation" value="4 sites, 2 N-linked glycans (1 site)"/>
</dbReference>
<dbReference type="iPTMnet" id="Q93033"/>
<dbReference type="PhosphoSitePlus" id="Q93033"/>
<dbReference type="BioMuta" id="CD101"/>
<dbReference type="DMDM" id="223590070"/>
<dbReference type="MassIVE" id="Q93033"/>
<dbReference type="PaxDb" id="9606-ENSP00000358482"/>
<dbReference type="PeptideAtlas" id="Q93033"/>
<dbReference type="ProteomicsDB" id="75672"/>
<dbReference type="Antibodypedia" id="20186">
    <property type="antibodies" value="367 antibodies from 33 providers"/>
</dbReference>
<dbReference type="DNASU" id="9398"/>
<dbReference type="Ensembl" id="ENST00000256652.8">
    <property type="protein sequence ID" value="ENSP00000256652.4"/>
    <property type="gene ID" value="ENSG00000134256.13"/>
</dbReference>
<dbReference type="Ensembl" id="ENST00000369470.1">
    <property type="protein sequence ID" value="ENSP00000358482.1"/>
    <property type="gene ID" value="ENSG00000134256.13"/>
</dbReference>
<dbReference type="Ensembl" id="ENST00000682167.1">
    <property type="protein sequence ID" value="ENSP00000508039.1"/>
    <property type="gene ID" value="ENSG00000134256.13"/>
</dbReference>
<dbReference type="GeneID" id="9398"/>
<dbReference type="KEGG" id="hsa:9398"/>
<dbReference type="MANE-Select" id="ENST00000682167.1">
    <property type="protein sequence ID" value="ENSP00000508039.1"/>
    <property type="RefSeq nucleotide sequence ID" value="NM_001256106.3"/>
    <property type="RefSeq protein sequence ID" value="NP_001243035.1"/>
</dbReference>
<dbReference type="UCSC" id="uc010oxc.3">
    <property type="organism name" value="human"/>
</dbReference>
<dbReference type="AGR" id="HGNC:5949"/>
<dbReference type="CTD" id="9398"/>
<dbReference type="DisGeNET" id="9398"/>
<dbReference type="GeneCards" id="CD101"/>
<dbReference type="HGNC" id="HGNC:5949">
    <property type="gene designation" value="CD101"/>
</dbReference>
<dbReference type="HPA" id="ENSG00000134256">
    <property type="expression patterns" value="Tissue enhanced (bone marrow, intestine, lung)"/>
</dbReference>
<dbReference type="MIM" id="604516">
    <property type="type" value="gene"/>
</dbReference>
<dbReference type="neXtProt" id="NX_Q93033"/>
<dbReference type="OpenTargets" id="ENSG00000134256"/>
<dbReference type="PharmGKB" id="PA29762"/>
<dbReference type="VEuPathDB" id="HostDB:ENSG00000134256"/>
<dbReference type="eggNOG" id="ENOG502QRRB">
    <property type="taxonomic scope" value="Eukaryota"/>
</dbReference>
<dbReference type="GeneTree" id="ENSGT00940000161722"/>
<dbReference type="HOGENOM" id="CLU_005187_0_0_1"/>
<dbReference type="InParanoid" id="Q93033"/>
<dbReference type="OMA" id="SKWVNQA"/>
<dbReference type="OrthoDB" id="9890427at2759"/>
<dbReference type="PAN-GO" id="Q93033">
    <property type="GO annotations" value="1 GO annotation based on evolutionary models"/>
</dbReference>
<dbReference type="PhylomeDB" id="Q93033"/>
<dbReference type="TreeFam" id="TF332702"/>
<dbReference type="PathwayCommons" id="Q93033"/>
<dbReference type="Reactome" id="R-HSA-202433">
    <property type="pathway name" value="Generation of second messenger molecules"/>
</dbReference>
<dbReference type="SignaLink" id="Q93033"/>
<dbReference type="BioGRID-ORCS" id="9398">
    <property type="hits" value="21 hits in 1147 CRISPR screens"/>
</dbReference>
<dbReference type="ChiTaRS" id="CD101">
    <property type="organism name" value="human"/>
</dbReference>
<dbReference type="GeneWiki" id="IGSF2"/>
<dbReference type="GenomeRNAi" id="9398"/>
<dbReference type="Pharos" id="Q93033">
    <property type="development level" value="Tbio"/>
</dbReference>
<dbReference type="PRO" id="PR:Q93033"/>
<dbReference type="Proteomes" id="UP000005640">
    <property type="component" value="Chromosome 1"/>
</dbReference>
<dbReference type="RNAct" id="Q93033">
    <property type="molecule type" value="protein"/>
</dbReference>
<dbReference type="Bgee" id="ENSG00000134256">
    <property type="expression patterns" value="Expressed in monocyte and 95 other cell types or tissues"/>
</dbReference>
<dbReference type="GO" id="GO:0070062">
    <property type="term" value="C:extracellular exosome"/>
    <property type="evidence" value="ECO:0007005"/>
    <property type="project" value="UniProtKB"/>
</dbReference>
<dbReference type="GO" id="GO:0016020">
    <property type="term" value="C:membrane"/>
    <property type="evidence" value="ECO:0000318"/>
    <property type="project" value="GO_Central"/>
</dbReference>
<dbReference type="GO" id="GO:0005886">
    <property type="term" value="C:plasma membrane"/>
    <property type="evidence" value="ECO:0000304"/>
    <property type="project" value="ProtInc"/>
</dbReference>
<dbReference type="GO" id="GO:0016812">
    <property type="term" value="F:hydrolase activity, acting on carbon-nitrogen (but not peptide) bonds, in cyclic amides"/>
    <property type="evidence" value="ECO:0007669"/>
    <property type="project" value="InterPro"/>
</dbReference>
<dbReference type="GO" id="GO:0007166">
    <property type="term" value="P:cell surface receptor signaling pathway"/>
    <property type="evidence" value="ECO:0000304"/>
    <property type="project" value="ProtInc"/>
</dbReference>
<dbReference type="GO" id="GO:0002763">
    <property type="term" value="P:positive regulation of myeloid leukocyte differentiation"/>
    <property type="evidence" value="ECO:0007669"/>
    <property type="project" value="Ensembl"/>
</dbReference>
<dbReference type="CDD" id="cd00099">
    <property type="entry name" value="IgV"/>
    <property type="match status" value="3"/>
</dbReference>
<dbReference type="FunFam" id="2.60.40.10:FF:001387">
    <property type="entry name" value="CD101 molecule"/>
    <property type="match status" value="1"/>
</dbReference>
<dbReference type="FunFam" id="2.60.40.10:FF:001440">
    <property type="entry name" value="CD101 molecule"/>
    <property type="match status" value="1"/>
</dbReference>
<dbReference type="FunFam" id="2.60.40.10:FF:001456">
    <property type="entry name" value="CD101 molecule"/>
    <property type="match status" value="1"/>
</dbReference>
<dbReference type="FunFam" id="2.60.40.10:FF:001481">
    <property type="entry name" value="CD101 molecule"/>
    <property type="match status" value="1"/>
</dbReference>
<dbReference type="FunFam" id="2.60.40.10:FF:001961">
    <property type="entry name" value="CD101 molecule"/>
    <property type="match status" value="1"/>
</dbReference>
<dbReference type="FunFam" id="2.60.40.10:FF:000191">
    <property type="entry name" value="Immunoglobulin superfamily member 3"/>
    <property type="match status" value="1"/>
</dbReference>
<dbReference type="FunFam" id="2.60.40.10:FF:000491">
    <property type="entry name" value="Immunoglobulin superfamily, member 3"/>
    <property type="match status" value="1"/>
</dbReference>
<dbReference type="Gene3D" id="2.60.40.10">
    <property type="entry name" value="Immunoglobulins"/>
    <property type="match status" value="7"/>
</dbReference>
<dbReference type="InterPro" id="IPR002195">
    <property type="entry name" value="Dihydroorotase_CS"/>
</dbReference>
<dbReference type="InterPro" id="IPR007110">
    <property type="entry name" value="Ig-like_dom"/>
</dbReference>
<dbReference type="InterPro" id="IPR036179">
    <property type="entry name" value="Ig-like_dom_sf"/>
</dbReference>
<dbReference type="InterPro" id="IPR013783">
    <property type="entry name" value="Ig-like_fold"/>
</dbReference>
<dbReference type="InterPro" id="IPR003599">
    <property type="entry name" value="Ig_sub"/>
</dbReference>
<dbReference type="InterPro" id="IPR013106">
    <property type="entry name" value="Ig_V-set"/>
</dbReference>
<dbReference type="InterPro" id="IPR051102">
    <property type="entry name" value="IgSF_V-set/TM_domain"/>
</dbReference>
<dbReference type="PANTHER" id="PTHR12207">
    <property type="entry name" value="V-SET AND TRANSMEMBRANE DOMAIN-CONTAINING PROTEIN"/>
    <property type="match status" value="1"/>
</dbReference>
<dbReference type="Pfam" id="PF07686">
    <property type="entry name" value="V-set"/>
    <property type="match status" value="3"/>
</dbReference>
<dbReference type="SMART" id="SM00409">
    <property type="entry name" value="IG"/>
    <property type="match status" value="7"/>
</dbReference>
<dbReference type="SMART" id="SM00406">
    <property type="entry name" value="IGv"/>
    <property type="match status" value="4"/>
</dbReference>
<dbReference type="SUPFAM" id="SSF48726">
    <property type="entry name" value="Immunoglobulin"/>
    <property type="match status" value="7"/>
</dbReference>
<dbReference type="PROSITE" id="PS50835">
    <property type="entry name" value="IG_LIKE"/>
    <property type="match status" value="7"/>
</dbReference>
<keyword id="KW-1015">Disulfide bond</keyword>
<keyword id="KW-0325">Glycoprotein</keyword>
<keyword id="KW-0393">Immunoglobulin domain</keyword>
<keyword id="KW-0472">Membrane</keyword>
<keyword id="KW-1267">Proteomics identification</keyword>
<keyword id="KW-1185">Reference proteome</keyword>
<keyword id="KW-0677">Repeat</keyword>
<keyword id="KW-0732">Signal</keyword>
<keyword id="KW-0812">Transmembrane</keyword>
<keyword id="KW-1133">Transmembrane helix</keyword>
<name>IGSF2_HUMAN</name>
<protein>
    <recommendedName>
        <fullName>Immunoglobulin superfamily member 2</fullName>
        <shortName>IgSF2</shortName>
    </recommendedName>
    <alternativeName>
        <fullName>Cell surface glycoprotein V7</fullName>
    </alternativeName>
    <alternativeName>
        <fullName>Glu-Trp-Ile EWI motif-containing protein 101</fullName>
        <shortName>EWI-101</shortName>
    </alternativeName>
    <cdAntigenName>CD101</cdAntigenName>
</protein>
<organism>
    <name type="scientific">Homo sapiens</name>
    <name type="common">Human</name>
    <dbReference type="NCBI Taxonomy" id="9606"/>
    <lineage>
        <taxon>Eukaryota</taxon>
        <taxon>Metazoa</taxon>
        <taxon>Chordata</taxon>
        <taxon>Craniata</taxon>
        <taxon>Vertebrata</taxon>
        <taxon>Euteleostomi</taxon>
        <taxon>Mammalia</taxon>
        <taxon>Eutheria</taxon>
        <taxon>Euarchontoglires</taxon>
        <taxon>Primates</taxon>
        <taxon>Haplorrhini</taxon>
        <taxon>Catarrhini</taxon>
        <taxon>Hominidae</taxon>
        <taxon>Homo</taxon>
    </lineage>
</organism>
<sequence>MAGISYVASFFLLLTKLSIGQREVTVQKGPLFRAEGYPVSIGCNVTGHQGPSEQHFQWSVYLPTNPTQEVQIISTKDAAFSYAVYTQRVRSGDVYVERVQGNSVLLHISKLQMKDAGEYECHTPNTDEKYYGSYSAKTNLIVIPDTLSATMSSQTLGKEEGEPLALTCEASKATAQHTHLSVTWYLTQDGGGSQATEIISLSKDFILVPGPLYTERFAASDVQLNKLGPTTFRLSIERLQSSDQGQLFCEATEWIQDPDETWMFITKKQTDQTTLRIQPAVKDFQVNITADSLFAEGKPLELVCLVVSSGRDPQLQGIWFFNGTEIAHIDAGGVLGLKNDYKERASQGELQVSKLGPKAFSLKIFSLGPEDEGAYRCVVAEVMKTRTGSWQVLQRKQSPDSHVHLRKPAARSVVMSTKNKQQVVWEGETLAFLCKAGGAESPLSVSWWHIPRDQTQPEFVAGMGQDGIVQLGASYGVPSYHGNTRLEKMDWATFQLEITFTAITDSGTYECRVSEKSRNQARDLSWTQKISVTVKSLESSLQVSLMSRQPQVMLTNTFDLSCVVRAGYSDLKVPLTVTWQFQPASSHIFHQLIRITHNGTIEWGNFLSRFQKKTKVSQSLFRSQLLVHDATEEETGVYQCEVEVYDRNSLYNNRPPRASAISHPLRIAVTLPESKLKVNSRSQVQELSINSNTDIECSILSRSNGNLQLAIIWYFSPVSTNASWLKILEMDQTNVIKTGDEFHTPQRKQKFHTEKVSQDLFQLHILNVEDSDRGKYHCAVEEWLLSTNGTWHKLGEKKSGLTELKLKPTGSKVRVSKVYWTENVTEHREVAIRCSLESVGSSATLYSVMWYWNRENSGSKLLVHLQHDGLLEYGEEGLRRHLHCYRSSSTDFVLKLHQVEMEDAGMYWCRVAEWQLHGHPSKWINQASDESQRMVLTVLPSEPTLPSRICSSAPLLYFLFICPFVLLLLLLISLLCLYWKARKLSTLRSNTRKEKALWVDLKEAGGVTTNRREDEEEDEGN</sequence>
<gene>
    <name type="primary">CD101</name>
    <name type="synonym">EWI101</name>
    <name type="synonym">IGSF2</name>
    <name type="synonym">V7</name>
</gene>
<accession>Q93033</accession>
<accession>Q15856</accession>
<evidence type="ECO:0000255" key="1"/>
<evidence type="ECO:0000255" key="2">
    <source>
        <dbReference type="PROSITE-ProRule" id="PRU00114"/>
    </source>
</evidence>
<evidence type="ECO:0000269" key="3">
    <source>
    </source>
</evidence>
<evidence type="ECO:0000269" key="4">
    <source>
    </source>
</evidence>
<evidence type="ECO:0000269" key="5">
    <source>
    </source>
</evidence>
<evidence type="ECO:0000269" key="6">
    <source>
    </source>
</evidence>
<evidence type="ECO:0000269" key="7">
    <source>
    </source>
</evidence>
<evidence type="ECO:0000269" key="8">
    <source>
    </source>
</evidence>
<evidence type="ECO:0000269" key="9">
    <source>
    </source>
</evidence>
<evidence type="ECO:0000269" key="10">
    <source>
    </source>
</evidence>
<evidence type="ECO:0000305" key="11"/>
<reference key="1">
    <citation type="journal article" date="1995" name="J. Immunol.">
        <title>V7, a novel leukocyte surface protein that participates in T cell activation. II. Molecular cloning and characterization of the V7 gene.</title>
        <authorList>
            <person name="Ruegg C.L."/>
            <person name="Rivas A."/>
            <person name="Madani N.D."/>
            <person name="Zeitung J."/>
            <person name="Laus R."/>
            <person name="Engleman E.G."/>
        </authorList>
    </citation>
    <scope>NUCLEOTIDE SEQUENCE [MRNA]</scope>
    <scope>TISSUE SPECIFICITY</scope>
    <scope>VARIANT VAL-415</scope>
</reference>
<reference key="2">
    <citation type="journal article" date="2006" name="Nature">
        <title>The DNA sequence and biological annotation of human chromosome 1.</title>
        <authorList>
            <person name="Gregory S.G."/>
            <person name="Barlow K.F."/>
            <person name="McLay K.E."/>
            <person name="Kaul R."/>
            <person name="Swarbreck D."/>
            <person name="Dunham A."/>
            <person name="Scott C.E."/>
            <person name="Howe K.L."/>
            <person name="Woodfine K."/>
            <person name="Spencer C.C.A."/>
            <person name="Jones M.C."/>
            <person name="Gillson C."/>
            <person name="Searle S."/>
            <person name="Zhou Y."/>
            <person name="Kokocinski F."/>
            <person name="McDonald L."/>
            <person name="Evans R."/>
            <person name="Phillips K."/>
            <person name="Atkinson A."/>
            <person name="Cooper R."/>
            <person name="Jones C."/>
            <person name="Hall R.E."/>
            <person name="Andrews T.D."/>
            <person name="Lloyd C."/>
            <person name="Ainscough R."/>
            <person name="Almeida J.P."/>
            <person name="Ambrose K.D."/>
            <person name="Anderson F."/>
            <person name="Andrew R.W."/>
            <person name="Ashwell R.I.S."/>
            <person name="Aubin K."/>
            <person name="Babbage A.K."/>
            <person name="Bagguley C.L."/>
            <person name="Bailey J."/>
            <person name="Beasley H."/>
            <person name="Bethel G."/>
            <person name="Bird C.P."/>
            <person name="Bray-Allen S."/>
            <person name="Brown J.Y."/>
            <person name="Brown A.J."/>
            <person name="Buckley D."/>
            <person name="Burton J."/>
            <person name="Bye J."/>
            <person name="Carder C."/>
            <person name="Chapman J.C."/>
            <person name="Clark S.Y."/>
            <person name="Clarke G."/>
            <person name="Clee C."/>
            <person name="Cobley V."/>
            <person name="Collier R.E."/>
            <person name="Corby N."/>
            <person name="Coville G.J."/>
            <person name="Davies J."/>
            <person name="Deadman R."/>
            <person name="Dunn M."/>
            <person name="Earthrowl M."/>
            <person name="Ellington A.G."/>
            <person name="Errington H."/>
            <person name="Frankish A."/>
            <person name="Frankland J."/>
            <person name="French L."/>
            <person name="Garner P."/>
            <person name="Garnett J."/>
            <person name="Gay L."/>
            <person name="Ghori M.R.J."/>
            <person name="Gibson R."/>
            <person name="Gilby L.M."/>
            <person name="Gillett W."/>
            <person name="Glithero R.J."/>
            <person name="Grafham D.V."/>
            <person name="Griffiths C."/>
            <person name="Griffiths-Jones S."/>
            <person name="Grocock R."/>
            <person name="Hammond S."/>
            <person name="Harrison E.S.I."/>
            <person name="Hart E."/>
            <person name="Haugen E."/>
            <person name="Heath P.D."/>
            <person name="Holmes S."/>
            <person name="Holt K."/>
            <person name="Howden P.J."/>
            <person name="Hunt A.R."/>
            <person name="Hunt S.E."/>
            <person name="Hunter G."/>
            <person name="Isherwood J."/>
            <person name="James R."/>
            <person name="Johnson C."/>
            <person name="Johnson D."/>
            <person name="Joy A."/>
            <person name="Kay M."/>
            <person name="Kershaw J.K."/>
            <person name="Kibukawa M."/>
            <person name="Kimberley A.M."/>
            <person name="King A."/>
            <person name="Knights A.J."/>
            <person name="Lad H."/>
            <person name="Laird G."/>
            <person name="Lawlor S."/>
            <person name="Leongamornlert D.A."/>
            <person name="Lloyd D.M."/>
            <person name="Loveland J."/>
            <person name="Lovell J."/>
            <person name="Lush M.J."/>
            <person name="Lyne R."/>
            <person name="Martin S."/>
            <person name="Mashreghi-Mohammadi M."/>
            <person name="Matthews L."/>
            <person name="Matthews N.S.W."/>
            <person name="McLaren S."/>
            <person name="Milne S."/>
            <person name="Mistry S."/>
            <person name="Moore M.J.F."/>
            <person name="Nickerson T."/>
            <person name="O'Dell C.N."/>
            <person name="Oliver K."/>
            <person name="Palmeiri A."/>
            <person name="Palmer S.A."/>
            <person name="Parker A."/>
            <person name="Patel D."/>
            <person name="Pearce A.V."/>
            <person name="Peck A.I."/>
            <person name="Pelan S."/>
            <person name="Phelps K."/>
            <person name="Phillimore B.J."/>
            <person name="Plumb R."/>
            <person name="Rajan J."/>
            <person name="Raymond C."/>
            <person name="Rouse G."/>
            <person name="Saenphimmachak C."/>
            <person name="Sehra H.K."/>
            <person name="Sheridan E."/>
            <person name="Shownkeen R."/>
            <person name="Sims S."/>
            <person name="Skuce C.D."/>
            <person name="Smith M."/>
            <person name="Steward C."/>
            <person name="Subramanian S."/>
            <person name="Sycamore N."/>
            <person name="Tracey A."/>
            <person name="Tromans A."/>
            <person name="Van Helmond Z."/>
            <person name="Wall M."/>
            <person name="Wallis J.M."/>
            <person name="White S."/>
            <person name="Whitehead S.L."/>
            <person name="Wilkinson J.E."/>
            <person name="Willey D.L."/>
            <person name="Williams H."/>
            <person name="Wilming L."/>
            <person name="Wray P.W."/>
            <person name="Wu Z."/>
            <person name="Coulson A."/>
            <person name="Vaudin M."/>
            <person name="Sulston J.E."/>
            <person name="Durbin R.M."/>
            <person name="Hubbard T."/>
            <person name="Wooster R."/>
            <person name="Dunham I."/>
            <person name="Carter N.P."/>
            <person name="McVean G."/>
            <person name="Ross M.T."/>
            <person name="Harrow J."/>
            <person name="Olson M.V."/>
            <person name="Beck S."/>
            <person name="Rogers J."/>
            <person name="Bentley D.R."/>
        </authorList>
    </citation>
    <scope>NUCLEOTIDE SEQUENCE [LARGE SCALE GENOMIC DNA]</scope>
</reference>
<reference key="3">
    <citation type="journal article" date="1995" name="J. Immunol.">
        <title>V7, a novel leukocyte surface protein that participates in T cell activation. I. Tissue distribution and functional studies.</title>
        <authorList>
            <person name="Rivas A."/>
            <person name="Ruegg C.L."/>
            <person name="Zeitung J."/>
            <person name="Laus R."/>
            <person name="Warnke R."/>
            <person name="Benike C."/>
            <person name="Engleman E.G."/>
        </authorList>
    </citation>
    <scope>FUNCTION</scope>
    <scope>GLYCOSYLATION</scope>
    <scope>TISSUE SPECIFICITY</scope>
</reference>
<reference key="4">
    <citation type="journal article" date="1997" name="J. Immunol.">
        <title>Ligation of the V7 molecule on T cells blocks anergy induction through a CD28-independent mechanism.</title>
        <authorList>
            <person name="Soares L.R.B."/>
            <person name="Rivas A."/>
            <person name="Tsavaler L."/>
            <person name="Engleman E.G."/>
        </authorList>
    </citation>
    <scope>FUNCTION</scope>
</reference>
<reference key="5">
    <citation type="journal article" date="1997" name="Tissue Antigens">
        <title>CD101 is expressed by skin dendritic cells. Role in T-lymphocyte activation.</title>
        <authorList>
            <person name="Bagot M."/>
            <person name="Martinel I."/>
            <person name="Charue D."/>
            <person name="Weill F."/>
            <person name="Boulland M.-L."/>
            <person name="Wechsler J."/>
            <person name="Freeman G.J."/>
            <person name="Bensussan A."/>
            <person name="Boumsell L."/>
        </authorList>
    </citation>
    <scope>TISSUE SPECIFICITY</scope>
    <scope>FUNCTION</scope>
</reference>
<reference key="6">
    <citation type="journal article" date="1998" name="J. Immunol.">
        <title>V7 (CD101) ligation inhibits TCR/CD3-induced IL-2 production by blocking Ca2+ flux and nuclear factor of activated T cell nuclear translocation.</title>
        <authorList>
            <person name="Soares L.R.B."/>
            <person name="Tsavaler L."/>
            <person name="Rivas A."/>
            <person name="Engleman E.G."/>
        </authorList>
    </citation>
    <scope>FUNCTION</scope>
</reference>
<reference key="7">
    <citation type="journal article" date="2000" name="Eur. J. Immunol.">
        <title>Triggering CD101 molecule on human cutaneous dendritic cells inhibits T cell proliferation via IL-10 production.</title>
        <authorList>
            <person name="Bouloc A."/>
            <person name="Bagot M."/>
            <person name="Delaire S."/>
            <person name="Bensussan A."/>
            <person name="Boumsell L."/>
        </authorList>
    </citation>
    <scope>FUNCTION</scope>
</reference>
<reference key="8">
    <citation type="journal article" date="2000" name="Histopathology">
        <title>CD101 expression by Langerhans cell histiocytosis cells.</title>
        <authorList>
            <person name="Bouloc A."/>
            <person name="Boulland M.-L."/>
            <person name="Geissmann F."/>
            <person name="Fraitag S."/>
            <person name="Andry P."/>
            <person name="Teillac D."/>
            <person name="Bensussan A."/>
            <person name="Revuz J."/>
            <person name="Boumsell L."/>
            <person name="Wechsler J."/>
            <person name="Bagot M."/>
        </authorList>
    </citation>
    <scope>TISSUE SPECIFICITY</scope>
</reference>
<reference key="9">
    <citation type="journal article" date="2001" name="J. Biol. Chem.">
        <title>EWI-2 is a major CD9 and CD81 partner and member of a novel Ig protein subfamily.</title>
        <authorList>
            <person name="Stipp C.S."/>
            <person name="Kolesnikova T.V."/>
            <person name="Hemler M.E."/>
        </authorList>
    </citation>
    <scope>DOMAIN EWI MOTIF</scope>
</reference>
<reference key="10">
    <citation type="journal article" date="2005" name="J. Invest. Dermatol.">
        <title>CD4+ CD56+ blastic tumor cells express CD101 molecules.</title>
        <authorList>
            <person name="Meyer N."/>
            <person name="Petrella T."/>
            <person name="Poszepczynska-Guigne E."/>
            <person name="Boumsell L."/>
            <person name="Wechsler J."/>
            <person name="Bensussan A."/>
            <person name="Bagot M."/>
        </authorList>
    </citation>
    <scope>FUNCTION</scope>
    <scope>TISSUE SPECIFICITY</scope>
</reference>
<feature type="signal peptide" evidence="1">
    <location>
        <begin position="1"/>
        <end position="20"/>
    </location>
</feature>
<feature type="chain" id="PRO_0000253539" description="Immunoglobulin superfamily member 2">
    <location>
        <begin position="21"/>
        <end position="1021"/>
    </location>
</feature>
<feature type="topological domain" description="Extracellular" evidence="1">
    <location>
        <begin position="21"/>
        <end position="954"/>
    </location>
</feature>
<feature type="transmembrane region" description="Helical" evidence="1">
    <location>
        <begin position="955"/>
        <end position="975"/>
    </location>
</feature>
<feature type="topological domain" description="Cytoplasmic" evidence="1">
    <location>
        <begin position="976"/>
        <end position="1021"/>
    </location>
</feature>
<feature type="domain" description="Ig-like C2-type 1">
    <location>
        <begin position="22"/>
        <end position="139"/>
    </location>
</feature>
<feature type="domain" description="Ig-like C2-type 2">
    <location>
        <begin position="144"/>
        <end position="265"/>
    </location>
</feature>
<feature type="domain" description="Ig-like C2-type 3">
    <location>
        <begin position="279"/>
        <end position="389"/>
    </location>
</feature>
<feature type="domain" description="Ig-like C2-type 4">
    <location>
        <begin position="408"/>
        <end position="525"/>
    </location>
</feature>
<feature type="domain" description="Ig-like C2-type 5">
    <location>
        <begin position="541"/>
        <end position="651"/>
    </location>
</feature>
<feature type="domain" description="Ig-like C2-type 6">
    <location>
        <begin position="656"/>
        <end position="794"/>
    </location>
</feature>
<feature type="domain" description="Ig-like C2-type 7">
    <location>
        <begin position="808"/>
        <end position="925"/>
    </location>
</feature>
<feature type="short sequence motif" description="EWI motif">
    <location>
        <begin position="253"/>
        <end position="255"/>
    </location>
</feature>
<feature type="glycosylation site" description="N-linked (GlcNAc...) asparagine" evidence="1">
    <location>
        <position position="44"/>
    </location>
</feature>
<feature type="glycosylation site" description="N-linked (GlcNAc...) asparagine" evidence="1">
    <location>
        <position position="322"/>
    </location>
</feature>
<feature type="disulfide bond" evidence="2">
    <location>
        <begin position="43"/>
        <end position="121"/>
    </location>
</feature>
<feature type="disulfide bond" evidence="2">
    <location>
        <begin position="168"/>
        <end position="249"/>
    </location>
</feature>
<feature type="disulfide bond" evidence="2">
    <location>
        <begin position="304"/>
        <end position="377"/>
    </location>
</feature>
<feature type="disulfide bond" evidence="2">
    <location>
        <begin position="434"/>
        <end position="511"/>
    </location>
</feature>
<feature type="disulfide bond" evidence="2">
    <location>
        <begin position="562"/>
        <end position="640"/>
    </location>
</feature>
<feature type="disulfide bond" evidence="2">
    <location>
        <begin position="697"/>
        <end position="778"/>
    </location>
</feature>
<feature type="disulfide bond" evidence="2">
    <location>
        <begin position="834"/>
        <end position="909"/>
    </location>
</feature>
<feature type="sequence variant" id="VAR_054434" description="In dbSNP:rs34999087.">
    <original>G</original>
    <variation>S</variation>
    <location>
        <position position="157"/>
    </location>
</feature>
<feature type="sequence variant" id="VAR_028371" description="In dbSNP:rs3754112.">
    <original>N</original>
    <variation>S</variation>
    <location>
        <position position="225"/>
    </location>
</feature>
<feature type="sequence variant" id="VAR_028372" description="In dbSNP:rs2249265." evidence="7">
    <original>M</original>
    <variation>V</variation>
    <location>
        <position position="415"/>
    </location>
</feature>
<feature type="sequence variant" id="VAR_028373" description="In dbSNP:rs17235766.">
    <original>R</original>
    <variation>Q</variation>
    <location>
        <position position="518"/>
    </location>
</feature>
<feature type="sequence variant" id="VAR_028374" description="In dbSNP:rs17235773.">
    <original>S</original>
    <variation>R</variation>
    <location>
        <position position="525"/>
    </location>
</feature>
<feature type="sequence variant" id="VAR_054435" description="In dbSNP:rs34510762.">
    <original>T</original>
    <variation>S</variation>
    <location>
        <position position="631"/>
    </location>
</feature>
<feature type="sequence variant" id="VAR_054436" description="In dbSNP:rs12093834.">
    <original>R</original>
    <variation>Q</variation>
    <location>
        <position position="933"/>
    </location>
</feature>
<feature type="sequence variant" id="VAR_054437" description="In dbSNP:rs34223095.">
    <original>L</original>
    <variation>F</variation>
    <location>
        <position position="955"/>
    </location>
</feature>
<feature type="sequence variant" id="VAR_028375" description="In dbSNP:rs12097758.">
    <original>V</original>
    <variation>I</variation>
    <location>
        <position position="965"/>
    </location>
</feature>
<feature type="sequence variant" id="VAR_028376" description="In dbSNP:rs12067543.">
    <original>R</original>
    <variation>C</variation>
    <location>
        <position position="988"/>
    </location>
</feature>
<feature type="sequence variant" id="VAR_054438" description="In dbSNP:rs34248572.">
    <original>R</original>
    <variation>W</variation>
    <location>
        <position position="992"/>
    </location>
</feature>
<feature type="sequence conflict" description="In Ref. 1; CAA83923." evidence="11" ref="1">
    <original>S</original>
    <variation>G</variation>
    <location>
        <position position="91"/>
    </location>
</feature>
<feature type="sequence conflict" description="In Ref. 1; CAA83923." evidence="11" ref="1">
    <original>K</original>
    <variation>N</variation>
    <location>
        <position position="129"/>
    </location>
</feature>
<feature type="sequence conflict" description="In Ref. 1; CAA83923." evidence="11" ref="1">
    <original>S</original>
    <variation>R</variation>
    <location>
        <position position="135"/>
    </location>
</feature>
<feature type="sequence conflict" description="In Ref. 1; CAA83923." evidence="11" ref="1">
    <original>V</original>
    <variation>L</variation>
    <location>
        <position position="352"/>
    </location>
</feature>
<feature type="sequence conflict" description="In Ref. 1; CAA83923." evidence="11" ref="1">
    <original>V</original>
    <variation>G</variation>
    <location>
        <position position="684"/>
    </location>
</feature>
<comment type="function">
    <text evidence="4 5 6 8 9 10">Plays a role as inhibitor of T-cells proliferation induced by CD3. Inhibits expression of IL2RA on activated T-cells and secretion of IL2. Inhibits tyrosine kinases that are required for IL2 production and cellular proliferation. Inhibits phospholipase C-gamma-1/PLCG1 phosphorylation and subsequent CD3-induced changes in intracellular free calcium. Prevents nuclear translocation of nuclear factor of activated T-cell to the nucleus. Plays a role in the inhibition of T-cell proliferation via IL10 secretion by cutaneous dendritic cells. May be a marker of CD4(+) CD56(+) leukemic tumor cells.</text>
</comment>
<comment type="subcellular location">
    <subcellularLocation>
        <location evidence="11">Membrane</location>
        <topology evidence="11">Single-pass type I membrane protein</topology>
    </subcellularLocation>
</comment>
<comment type="tissue specificity">
    <text evidence="3 5 6 7 9">Expressed in lung, thymus and small intestine. Detected in cutaneous dendritic cells, activated T-cells, monocytes and granulocytes as well as with epithelial cells with dendritic morphology. Expressed in some leukemic cells, the CD4(+) CD56(+) blastic tumor cells, as well as in Langerhans cells from LCH (Langerhans cell histiocytosis) patients.</text>
</comment>
<comment type="PTM">
    <text evidence="6">N-glycosylated.</text>
</comment>
<proteinExistence type="evidence at protein level"/>